<evidence type="ECO:0000250" key="1">
    <source>
        <dbReference type="UniProtKB" id="P07861"/>
    </source>
</evidence>
<evidence type="ECO:0000250" key="2">
    <source>
        <dbReference type="UniProtKB" id="P08473"/>
    </source>
</evidence>
<evidence type="ECO:0000255" key="3"/>
<evidence type="ECO:0000255" key="4">
    <source>
        <dbReference type="PROSITE-ProRule" id="PRU01233"/>
    </source>
</evidence>
<evidence type="ECO:0000255" key="5">
    <source>
        <dbReference type="PROSITE-ProRule" id="PRU10095"/>
    </source>
</evidence>
<evidence type="ECO:0000256" key="6">
    <source>
        <dbReference type="SAM" id="MobiDB-lite"/>
    </source>
</evidence>
<evidence type="ECO:0000269" key="7">
    <source>
    </source>
</evidence>
<evidence type="ECO:0000269" key="8">
    <source>
    </source>
</evidence>
<evidence type="ECO:0000303" key="9">
    <source>
    </source>
</evidence>
<evidence type="ECO:0000305" key="10"/>
<evidence type="ECO:0000305" key="11">
    <source>
    </source>
</evidence>
<evidence type="ECO:0007829" key="12">
    <source>
        <dbReference type="PDB" id="4XBH"/>
    </source>
</evidence>
<evidence type="ECO:0007829" key="13">
    <source>
        <dbReference type="PDB" id="5V48"/>
    </source>
</evidence>
<sequence>MGRSESQMDITDINTPKPKKKQRWTPLEISLSVLVLLLTVIAVTMIALYATYDDGICKSSDCIKSAARLIQNMDATAEPCTDFFKYACGGWLKRNVIPETSSRYSNFDILRDELEVILKDVLQEPKTEDIVAVQKAKTLYRSCVNETAIDSRGGQPLLKLLPDVYGWPVATQNWEQTYGTSWSAEKSIAQLNSNYGKKVLINFFVGTDDKNSMNHIIHIDQPRLGLPSRDYYECTGIYKEACTAYVDFMIAVAKLIRQEEGLPIDENQISVEMNKVMELEKEIANATTKSEDRNDPMLLYNKMTLAQIQNNFSLEINGKPFSWSNFTNEIMSTVNINIPNEEDVVVYAPEYLIKLKPILTKYFPRDFQNLFSWRFIMDLVSSLSRTYKDSRNAFRKALYGTTSESATWRRCANYVNGNMENAVGRLYVEAAFAGESKHVVEDLIAQIREVFIQTLDDLTWMDAETKKKAEEKALAIKERIGYPDDIVSNDNKLNNEYLELNYKEDEYFENIIQNLKFSQSKQLKKLREKVDKDEWITGAAIVNAFYSSGRNQIVFPAGILQPPFFSAQQSNSLNYGGIGMVIGHEITHGFDDNGRNFNKDGDLVDWWTQQSANNFKEQSQCMVYQYGNFSWDLAGGQHLNGINTLGENIADNGGIGQAYRAYQNYVKKNGEEKLLPGIDLNHKQLFFLNFAQVWCGTYRPEYAVNSIKTDVHSPGNFRIIGSLQNSVEFSEAFQCPKNSYMNPEKKCRVW</sequence>
<organism>
    <name type="scientific">Oryctolagus cuniculus</name>
    <name type="common">Rabbit</name>
    <dbReference type="NCBI Taxonomy" id="9986"/>
    <lineage>
        <taxon>Eukaryota</taxon>
        <taxon>Metazoa</taxon>
        <taxon>Chordata</taxon>
        <taxon>Craniata</taxon>
        <taxon>Vertebrata</taxon>
        <taxon>Euteleostomi</taxon>
        <taxon>Mammalia</taxon>
        <taxon>Eutheria</taxon>
        <taxon>Euarchontoglires</taxon>
        <taxon>Glires</taxon>
        <taxon>Lagomorpha</taxon>
        <taxon>Leporidae</taxon>
        <taxon>Oryctolagus</taxon>
    </lineage>
</organism>
<gene>
    <name type="primary">MME</name>
</gene>
<feature type="initiator methionine" description="Removed">
    <location>
        <position position="1"/>
    </location>
</feature>
<feature type="chain" id="PRO_0000078216" description="Neprilysin">
    <location>
        <begin position="2"/>
        <end position="750"/>
    </location>
</feature>
<feature type="topological domain" description="Cytoplasmic" evidence="3">
    <location>
        <begin position="2"/>
        <end position="28"/>
    </location>
</feature>
<feature type="transmembrane region" description="Helical; Signal-anchor for type II membrane protein" evidence="3">
    <location>
        <begin position="29"/>
        <end position="51"/>
    </location>
</feature>
<feature type="topological domain" description="Extracellular" evidence="3">
    <location>
        <begin position="52"/>
        <end position="750"/>
    </location>
</feature>
<feature type="domain" description="Peptidase M13" evidence="4">
    <location>
        <begin position="56"/>
        <end position="750"/>
    </location>
</feature>
<feature type="region of interest" description="Disordered" evidence="6">
    <location>
        <begin position="1"/>
        <end position="20"/>
    </location>
</feature>
<feature type="short sequence motif" description="Stop-transfer sequence" evidence="3">
    <location>
        <begin position="16"/>
        <end position="23"/>
    </location>
</feature>
<feature type="compositionally biased region" description="Polar residues" evidence="6">
    <location>
        <begin position="1"/>
        <end position="14"/>
    </location>
</feature>
<feature type="active site" evidence="4 5">
    <location>
        <position position="585"/>
    </location>
</feature>
<feature type="active site" description="Proton donor" evidence="4">
    <location>
        <position position="651"/>
    </location>
</feature>
<feature type="binding site" evidence="1">
    <location>
        <position position="103"/>
    </location>
    <ligand>
        <name>a peptide</name>
        <dbReference type="ChEBI" id="CHEBI:60466"/>
        <note>substrate</note>
    </ligand>
</feature>
<feature type="binding site" evidence="4 11">
    <location>
        <position position="584"/>
    </location>
    <ligand>
        <name>Zn(2+)</name>
        <dbReference type="ChEBI" id="CHEBI:29105"/>
        <note>catalytic</note>
    </ligand>
</feature>
<feature type="binding site" evidence="4 11">
    <location>
        <position position="588"/>
    </location>
    <ligand>
        <name>Zn(2+)</name>
        <dbReference type="ChEBI" id="CHEBI:29105"/>
        <note>catalytic</note>
    </ligand>
</feature>
<feature type="binding site" evidence="4">
    <location>
        <position position="647"/>
    </location>
    <ligand>
        <name>Zn(2+)</name>
        <dbReference type="ChEBI" id="CHEBI:29105"/>
        <note>catalytic</note>
    </ligand>
</feature>
<feature type="modified residue" description="Phosphoserine" evidence="2">
    <location>
        <position position="4"/>
    </location>
</feature>
<feature type="modified residue" description="Phosphoserine" evidence="2">
    <location>
        <position position="6"/>
    </location>
</feature>
<feature type="lipid moiety-binding region" description="N-myristoyl glycine" evidence="2">
    <location>
        <position position="2"/>
    </location>
</feature>
<feature type="glycosylation site" description="N-linked (GlcNAc...) asparagine" evidence="2">
    <location>
        <position position="145"/>
    </location>
</feature>
<feature type="glycosylation site" description="N-linked (GlcNAc...) asparagine" evidence="3">
    <location>
        <position position="285"/>
    </location>
</feature>
<feature type="glycosylation site" description="N-linked (GlcNAc...) asparagine" evidence="2">
    <location>
        <position position="311"/>
    </location>
</feature>
<feature type="glycosylation site" description="N-linked (GlcNAc...) asparagine" evidence="2">
    <location>
        <position position="325"/>
    </location>
</feature>
<feature type="glycosylation site" description="N-linked (GlcNAc...) asparagine">
    <location>
        <position position="628"/>
    </location>
</feature>
<feature type="disulfide bond" evidence="4">
    <location>
        <begin position="57"/>
        <end position="62"/>
    </location>
</feature>
<feature type="disulfide bond" evidence="4">
    <location>
        <begin position="80"/>
        <end position="735"/>
    </location>
</feature>
<feature type="disulfide bond" evidence="4">
    <location>
        <begin position="88"/>
        <end position="695"/>
    </location>
</feature>
<feature type="disulfide bond" evidence="4">
    <location>
        <begin position="143"/>
        <end position="411"/>
    </location>
</feature>
<feature type="disulfide bond" evidence="4">
    <location>
        <begin position="234"/>
        <end position="242"/>
    </location>
</feature>
<feature type="disulfide bond" evidence="4">
    <location>
        <begin position="621"/>
        <end position="747"/>
    </location>
</feature>
<feature type="mutagenesis site" description="Abolished peptidase activity." evidence="7">
    <original>H</original>
    <variation>F</variation>
    <location>
        <position position="584"/>
    </location>
</feature>
<feature type="mutagenesis site" description="Abolished peptidase activity." evidence="7">
    <original>H</original>
    <variation>F</variation>
    <location>
        <position position="588"/>
    </location>
</feature>
<feature type="mutagenesis site" description="Does not affect the peptidase activity." evidence="7">
    <original>H</original>
    <variation>F</variation>
    <location>
        <position position="638"/>
    </location>
</feature>
<feature type="helix" evidence="12">
    <location>
        <begin position="60"/>
        <end position="72"/>
    </location>
</feature>
<feature type="turn" evidence="12">
    <location>
        <begin position="79"/>
        <end position="81"/>
    </location>
</feature>
<feature type="helix" evidence="12">
    <location>
        <begin position="83"/>
        <end position="94"/>
    </location>
</feature>
<feature type="strand" evidence="12">
    <location>
        <begin position="102"/>
        <end position="105"/>
    </location>
</feature>
<feature type="helix" evidence="12">
    <location>
        <begin position="106"/>
        <end position="122"/>
    </location>
</feature>
<feature type="helix" evidence="12">
    <location>
        <begin position="131"/>
        <end position="144"/>
    </location>
</feature>
<feature type="helix" evidence="12">
    <location>
        <begin position="146"/>
        <end position="150"/>
    </location>
</feature>
<feature type="turn" evidence="12">
    <location>
        <begin position="151"/>
        <end position="154"/>
    </location>
</feature>
<feature type="helix" evidence="12">
    <location>
        <begin position="155"/>
        <end position="160"/>
    </location>
</feature>
<feature type="helix" evidence="12">
    <location>
        <begin position="161"/>
        <end position="164"/>
    </location>
</feature>
<feature type="helix" evidence="12">
    <location>
        <begin position="168"/>
        <end position="170"/>
    </location>
</feature>
<feature type="strand" evidence="12">
    <location>
        <begin position="171"/>
        <end position="173"/>
    </location>
</feature>
<feature type="helix" evidence="12">
    <location>
        <begin position="174"/>
        <end position="177"/>
    </location>
</feature>
<feature type="turn" evidence="12">
    <location>
        <begin position="178"/>
        <end position="181"/>
    </location>
</feature>
<feature type="helix" evidence="12">
    <location>
        <begin position="184"/>
        <end position="195"/>
    </location>
</feature>
<feature type="strand" evidence="12">
    <location>
        <begin position="200"/>
        <end position="208"/>
    </location>
</feature>
<feature type="strand" evidence="12">
    <location>
        <begin position="211"/>
        <end position="220"/>
    </location>
</feature>
<feature type="strand" evidence="12">
    <location>
        <begin position="225"/>
        <end position="228"/>
    </location>
</feature>
<feature type="helix" evidence="12">
    <location>
        <begin position="229"/>
        <end position="233"/>
    </location>
</feature>
<feature type="helix" evidence="12">
    <location>
        <begin position="236"/>
        <end position="238"/>
    </location>
</feature>
<feature type="helix" evidence="12">
    <location>
        <begin position="239"/>
        <end position="259"/>
    </location>
</feature>
<feature type="helix" evidence="12">
    <location>
        <begin position="266"/>
        <end position="286"/>
    </location>
</feature>
<feature type="helix" evidence="12">
    <location>
        <begin position="290"/>
        <end position="293"/>
    </location>
</feature>
<feature type="helix" evidence="12">
    <location>
        <begin position="296"/>
        <end position="299"/>
    </location>
</feature>
<feature type="strand" evidence="12">
    <location>
        <begin position="302"/>
        <end position="304"/>
    </location>
</feature>
<feature type="helix" evidence="12">
    <location>
        <begin position="305"/>
        <end position="311"/>
    </location>
</feature>
<feature type="helix" evidence="12">
    <location>
        <begin position="323"/>
        <end position="331"/>
    </location>
</feature>
<feature type="helix" evidence="12">
    <location>
        <begin position="332"/>
        <end position="334"/>
    </location>
</feature>
<feature type="strand" evidence="12">
    <location>
        <begin position="343"/>
        <end position="347"/>
    </location>
</feature>
<feature type="helix" evidence="12">
    <location>
        <begin position="349"/>
        <end position="359"/>
    </location>
</feature>
<feature type="helix" evidence="12">
    <location>
        <begin position="364"/>
        <end position="376"/>
    </location>
</feature>
<feature type="turn" evidence="12">
    <location>
        <begin position="377"/>
        <end position="379"/>
    </location>
</feature>
<feature type="helix" evidence="12">
    <location>
        <begin position="380"/>
        <end position="382"/>
    </location>
</feature>
<feature type="helix" evidence="12">
    <location>
        <begin position="385"/>
        <end position="389"/>
    </location>
</feature>
<feature type="helix" evidence="12">
    <location>
        <begin position="392"/>
        <end position="399"/>
    </location>
</feature>
<feature type="helix" evidence="12">
    <location>
        <begin position="407"/>
        <end position="418"/>
    </location>
</feature>
<feature type="helix" evidence="12">
    <location>
        <begin position="420"/>
        <end position="431"/>
    </location>
</feature>
<feature type="helix" evidence="12">
    <location>
        <begin position="436"/>
        <end position="454"/>
    </location>
</feature>
<feature type="turn" evidence="12">
    <location>
        <begin position="455"/>
        <end position="457"/>
    </location>
</feature>
<feature type="strand" evidence="13">
    <location>
        <begin position="459"/>
        <end position="461"/>
    </location>
</feature>
<feature type="helix" evidence="12">
    <location>
        <begin position="463"/>
        <end position="475"/>
    </location>
</feature>
<feature type="strand" evidence="12">
    <location>
        <begin position="477"/>
        <end position="481"/>
    </location>
</feature>
<feature type="helix" evidence="12">
    <location>
        <begin position="485"/>
        <end position="488"/>
    </location>
</feature>
<feature type="helix" evidence="12">
    <location>
        <begin position="490"/>
        <end position="496"/>
    </location>
</feature>
<feature type="turn" evidence="12">
    <location>
        <begin position="497"/>
        <end position="499"/>
    </location>
</feature>
<feature type="helix" evidence="12">
    <location>
        <begin position="507"/>
        <end position="523"/>
    </location>
</feature>
<feature type="helix" evidence="12">
    <location>
        <begin position="524"/>
        <end position="527"/>
    </location>
</feature>
<feature type="strand" evidence="12">
    <location>
        <begin position="545"/>
        <end position="547"/>
    </location>
</feature>
<feature type="turn" evidence="12">
    <location>
        <begin position="548"/>
        <end position="551"/>
    </location>
</feature>
<feature type="strand" evidence="12">
    <location>
        <begin position="552"/>
        <end position="556"/>
    </location>
</feature>
<feature type="helix" evidence="12">
    <location>
        <begin position="557"/>
        <end position="559"/>
    </location>
</feature>
<feature type="turn" evidence="12">
    <location>
        <begin position="562"/>
        <end position="564"/>
    </location>
</feature>
<feature type="helix" evidence="12">
    <location>
        <begin position="571"/>
        <end position="576"/>
    </location>
</feature>
<feature type="helix" evidence="12">
    <location>
        <begin position="578"/>
        <end position="588"/>
    </location>
</feature>
<feature type="helix" evidence="12">
    <location>
        <begin position="594"/>
        <end position="596"/>
    </location>
</feature>
<feature type="helix" evidence="12">
    <location>
        <begin position="609"/>
        <end position="627"/>
    </location>
</feature>
<feature type="helix" evidence="12">
    <location>
        <begin position="632"/>
        <end position="634"/>
    </location>
</feature>
<feature type="turn" evidence="12">
    <location>
        <begin position="641"/>
        <end position="644"/>
    </location>
</feature>
<feature type="helix" evidence="12">
    <location>
        <begin position="645"/>
        <end position="669"/>
    </location>
</feature>
<feature type="helix" evidence="12">
    <location>
        <begin position="682"/>
        <end position="693"/>
    </location>
</feature>
<feature type="strand" evidence="12">
    <location>
        <begin position="696"/>
        <end position="698"/>
    </location>
</feature>
<feature type="helix" evidence="12">
    <location>
        <begin position="700"/>
        <end position="709"/>
    </location>
</feature>
<feature type="helix" evidence="12">
    <location>
        <begin position="715"/>
        <end position="724"/>
    </location>
</feature>
<feature type="helix" evidence="12">
    <location>
        <begin position="727"/>
        <end position="732"/>
    </location>
</feature>
<name>NEP_RABIT</name>
<keyword id="KW-0002">3D-structure</keyword>
<keyword id="KW-1003">Cell membrane</keyword>
<keyword id="KW-0903">Direct protein sequencing</keyword>
<keyword id="KW-1015">Disulfide bond</keyword>
<keyword id="KW-0325">Glycoprotein</keyword>
<keyword id="KW-0378">Hydrolase</keyword>
<keyword id="KW-0449">Lipoprotein</keyword>
<keyword id="KW-0472">Membrane</keyword>
<keyword id="KW-0479">Metal-binding</keyword>
<keyword id="KW-0482">Metalloprotease</keyword>
<keyword id="KW-0519">Myristate</keyword>
<keyword id="KW-0597">Phosphoprotein</keyword>
<keyword id="KW-0645">Protease</keyword>
<keyword id="KW-1185">Reference proteome</keyword>
<keyword id="KW-0735">Signal-anchor</keyword>
<keyword id="KW-0812">Transmembrane</keyword>
<keyword id="KW-1133">Transmembrane helix</keyword>
<keyword id="KW-0862">Zinc</keyword>
<proteinExistence type="evidence at protein level"/>
<reference key="1">
    <citation type="journal article" date="1987" name="EMBO J.">
        <title>Amino acid sequence of rabbit kidney neutral endopeptidase 24.11 (enkephalinase) deduced from a complementary DNA.</title>
        <authorList>
            <person name="Devault A."/>
            <person name="Lazure C."/>
            <person name="Nault C."/>
            <person name="le Moual H."/>
            <person name="Seidah N.G."/>
            <person name="Chretien M."/>
            <person name="Kahn P."/>
            <person name="Powell J."/>
            <person name="Mallet J."/>
            <person name="Beaumont A."/>
            <person name="Roques B.P."/>
            <person name="Crine P."/>
            <person name="Boileau G."/>
        </authorList>
    </citation>
    <scope>NUCLEOTIDE SEQUENCE [MRNA]</scope>
    <scope>PARTIAL PROTEIN SEQUENCE</scope>
    <source>
        <tissue>Kidney</tissue>
    </source>
</reference>
<reference key="2">
    <citation type="journal article" date="1987" name="EMBO J.">
        <authorList>
            <person name="Devault A."/>
            <person name="Lazure C."/>
            <person name="Nault C."/>
            <person name="le Moual H."/>
            <person name="Seidah N.G."/>
            <person name="Chretien M."/>
            <person name="Kahn P."/>
            <person name="Powell J."/>
            <person name="Mallet J."/>
            <person name="Beaumont A."/>
            <person name="Roques B.P."/>
            <person name="Crine P."/>
            <person name="Boileau G."/>
        </authorList>
    </citation>
    <scope>ERRATUM OF PUBMED:2440677</scope>
</reference>
<reference key="3">
    <citation type="journal article" date="1987" name="Biochem. Biophys. Res. Commun.">
        <title>An antibody purified with a lambda GT11 fusion protein precipitates enkephalinase activity.</title>
        <authorList>
            <person name="Kahn P.H."/>
            <person name="Powell J.F."/>
            <person name="Beaumont A."/>
            <person name="Roques B.P."/>
            <person name="Mallet J.J."/>
        </authorList>
    </citation>
    <scope>NUCLEOTIDE SEQUENCE [MRNA] OF 206-274</scope>
</reference>
<reference key="4">
    <citation type="journal article" date="1988" name="FEBS Lett.">
        <title>Exploration of the catalytic site of endopeptidase 24.11 by site-directed mutagenesis. Histidine residues 583 and 587 are essential for catalysis.</title>
        <authorList>
            <person name="Devault A."/>
            <person name="Sales V."/>
            <person name="Nault C."/>
            <person name="Beaumont A."/>
            <person name="Roques B."/>
            <person name="Crine P."/>
            <person name="Boileau G."/>
        </authorList>
    </citation>
    <scope>FUNCTION</scope>
    <scope>CATALYTIC ACTIVITY</scope>
    <scope>COFACTOR</scope>
    <scope>MUTAGENESIS OF HIS-584; HIS-588 AND HIS-638</scope>
</reference>
<reference key="5">
    <citation type="journal article" date="1994" name="Proc. Natl. Acad. Sci. U.S.A.">
        <title>Dual inhibition of angiotensin-converting enzyme and neutral endopeptidase by the orally active inhibitor mixanpril: a potential therapeutic approach in hypertension.</title>
        <authorList>
            <person name="Fournie-Zaluski M.C."/>
            <person name="Gonzalez W."/>
            <person name="Turcaud S."/>
            <person name="Pham I."/>
            <person name="Roques B.P."/>
            <person name="Michel J.B."/>
        </authorList>
    </citation>
    <scope>FUNCTION</scope>
    <scope>ACTIVITY REGULATION</scope>
</reference>
<accession>P08049</accession>
<comment type="function">
    <text evidence="2 7">Thermolysin-like specificity, but is almost confined on acting on polypeptides of up to 30 amino acids (PubMed:3162886). Biologically important in the destruction of opioid peptides such as Met- and Leu-enkephalins by cleavage of a Gly-Phe bond. Catalyzes cleavage of bradykinin, substance P and neurotensin peptides (By similarity). Able to cleave angiotensin-1, angiotensin-2 and angiotensin 1-9. Involved in the degradation of atrial natriuretic factor (ANF) and brain natriuretic factor (BNP(1-32)) (By similarity). Displays UV-inducible elastase activity toward skin preelastic and elastic fibers (By similarity).</text>
</comment>
<comment type="catalytic activity">
    <reaction evidence="7">
        <text>Preferential cleavage of polypeptides between hydrophobic residues, particularly with Phe or Tyr at P1'.</text>
        <dbReference type="EC" id="3.4.24.11"/>
    </reaction>
</comment>
<comment type="catalytic activity">
    <reaction evidence="2">
        <text>substance P + H2O = substance P(1-9) + L-Leu-L-Met-NH2</text>
        <dbReference type="Rhea" id="RHEA:71459"/>
        <dbReference type="ChEBI" id="CHEBI:15377"/>
        <dbReference type="ChEBI" id="CHEBI:190692"/>
        <dbReference type="ChEBI" id="CHEBI:190693"/>
        <dbReference type="ChEBI" id="CHEBI:190700"/>
    </reaction>
    <physiologicalReaction direction="left-to-right" evidence="2">
        <dbReference type="Rhea" id="RHEA:71460"/>
    </physiologicalReaction>
</comment>
<comment type="catalytic activity">
    <reaction evidence="2">
        <text>substance P + H2O = substance P(1-7) + L-Phe-Gly-L-Leu-L-Met-NH2</text>
        <dbReference type="Rhea" id="RHEA:71467"/>
        <dbReference type="ChEBI" id="CHEBI:15377"/>
        <dbReference type="ChEBI" id="CHEBI:190692"/>
        <dbReference type="ChEBI" id="CHEBI:190695"/>
        <dbReference type="ChEBI" id="CHEBI:190698"/>
    </reaction>
    <physiologicalReaction direction="left-to-right" evidence="2">
        <dbReference type="Rhea" id="RHEA:71468"/>
    </physiologicalReaction>
</comment>
<comment type="catalytic activity">
    <reaction evidence="2">
        <text>neurotensin + H2O = neurotensin(1-11) + L-isoleucyl-L-leucine</text>
        <dbReference type="Rhea" id="RHEA:71475"/>
        <dbReference type="ChEBI" id="CHEBI:15377"/>
        <dbReference type="ChEBI" id="CHEBI:147362"/>
        <dbReference type="ChEBI" id="CHEBI:190704"/>
        <dbReference type="ChEBI" id="CHEBI:190706"/>
    </reaction>
    <physiologicalReaction direction="left-to-right" evidence="2">
        <dbReference type="Rhea" id="RHEA:71476"/>
    </physiologicalReaction>
</comment>
<comment type="catalytic activity">
    <reaction evidence="2">
        <text>neurotensin + H2O = neurotensin(1-10) + L-tyrosyl-L-isoleucyl-L-leucine</text>
        <dbReference type="Rhea" id="RHEA:71479"/>
        <dbReference type="ChEBI" id="CHEBI:15377"/>
        <dbReference type="ChEBI" id="CHEBI:147362"/>
        <dbReference type="ChEBI" id="CHEBI:190705"/>
        <dbReference type="ChEBI" id="CHEBI:190707"/>
    </reaction>
    <physiologicalReaction direction="left-to-right" evidence="2">
        <dbReference type="Rhea" id="RHEA:71480"/>
    </physiologicalReaction>
</comment>
<comment type="cofactor">
    <cofactor evidence="7">
        <name>Zn(2+)</name>
        <dbReference type="ChEBI" id="CHEBI:29105"/>
    </cofactor>
    <text evidence="2">Binds 1 zinc ion per subunit.</text>
</comment>
<comment type="activity regulation">
    <text evidence="8">Inhibited by mixanpril, an orally-active drug used for the treatment of hypertension.</text>
</comment>
<comment type="subcellular location">
    <subcellularLocation>
        <location evidence="2">Cell membrane</location>
        <topology evidence="3">Single-pass type II membrane protein</topology>
    </subcellularLocation>
</comment>
<comment type="PTM">
    <text evidence="2">Myristoylation is a determinant of membrane targeting.</text>
</comment>
<comment type="PTM">
    <text evidence="2">Glycosylation at Asn-628 is necessary both for surface expression and neutral endopeptidase activity.</text>
</comment>
<comment type="similarity">
    <text evidence="4 10">Belongs to the peptidase M13 family.</text>
</comment>
<protein>
    <recommendedName>
        <fullName>Neprilysin</fullName>
        <ecNumber evidence="7">3.4.24.11</ecNumber>
    </recommendedName>
    <alternativeName>
        <fullName>Atriopeptidase</fullName>
    </alternativeName>
    <alternativeName>
        <fullName>Enkephalinase</fullName>
    </alternativeName>
    <alternativeName>
        <fullName evidence="9">Neutral endopeptidase 24.11</fullName>
        <shortName>NEP</shortName>
        <shortName>Neutral endopeptidase</shortName>
    </alternativeName>
    <alternativeName>
        <fullName>Skin fibroblast elastase</fullName>
        <shortName>SFE</shortName>
    </alternativeName>
    <cdAntigenName>CD10</cdAntigenName>
</protein>
<dbReference type="EC" id="3.4.24.11" evidence="7"/>
<dbReference type="EMBL" id="X05338">
    <property type="protein sequence ID" value="CAA28950.1"/>
    <property type="molecule type" value="mRNA"/>
</dbReference>
<dbReference type="EMBL" id="M16593">
    <property type="protein sequence ID" value="AAA53694.1"/>
    <property type="molecule type" value="mRNA"/>
</dbReference>
<dbReference type="PIR" id="A29451">
    <property type="entry name" value="HYRBN"/>
</dbReference>
<dbReference type="RefSeq" id="NP_001095155.1">
    <property type="nucleotide sequence ID" value="NM_001101685.1"/>
</dbReference>
<dbReference type="PDB" id="4XBH">
    <property type="method" value="X-ray"/>
    <property type="resolution" value="2.11 A"/>
    <property type="chains" value="A/B=55-750"/>
</dbReference>
<dbReference type="PDB" id="4ZR5">
    <property type="method" value="X-ray"/>
    <property type="resolution" value="2.80 A"/>
    <property type="chains" value="A/B=55-750"/>
</dbReference>
<dbReference type="PDB" id="5V48">
    <property type="method" value="X-ray"/>
    <property type="resolution" value="3.00 A"/>
    <property type="chains" value="A/B=55-750"/>
</dbReference>
<dbReference type="PDBsum" id="4XBH"/>
<dbReference type="PDBsum" id="4ZR5"/>
<dbReference type="PDBsum" id="5V48"/>
<dbReference type="SMR" id="P08049"/>
<dbReference type="FunCoup" id="P08049">
    <property type="interactions" value="173"/>
</dbReference>
<dbReference type="STRING" id="9986.ENSOCUP00000041310"/>
<dbReference type="BindingDB" id="P08049"/>
<dbReference type="ChEMBL" id="CHEMBL3768"/>
<dbReference type="DrugCentral" id="P08049"/>
<dbReference type="MEROPS" id="M13.001"/>
<dbReference type="GlyCosmos" id="P08049">
    <property type="glycosylation" value="5 sites, No reported glycans"/>
</dbReference>
<dbReference type="PaxDb" id="9986-ENSOCUP00000024871"/>
<dbReference type="GeneID" id="100009251"/>
<dbReference type="KEGG" id="ocu:100009251"/>
<dbReference type="CTD" id="4311"/>
<dbReference type="eggNOG" id="KOG3624">
    <property type="taxonomic scope" value="Eukaryota"/>
</dbReference>
<dbReference type="InParanoid" id="P08049"/>
<dbReference type="OrthoDB" id="6475849at2759"/>
<dbReference type="PRO" id="PR:P08049"/>
<dbReference type="Proteomes" id="UP000001811">
    <property type="component" value="Unplaced"/>
</dbReference>
<dbReference type="GO" id="GO:0030424">
    <property type="term" value="C:axon"/>
    <property type="evidence" value="ECO:0000250"/>
    <property type="project" value="UniProtKB"/>
</dbReference>
<dbReference type="GO" id="GO:0005903">
    <property type="term" value="C:brush border"/>
    <property type="evidence" value="ECO:0000250"/>
    <property type="project" value="UniProtKB"/>
</dbReference>
<dbReference type="GO" id="GO:0005737">
    <property type="term" value="C:cytoplasm"/>
    <property type="evidence" value="ECO:0000250"/>
    <property type="project" value="UniProtKB"/>
</dbReference>
<dbReference type="GO" id="GO:0030425">
    <property type="term" value="C:dendrite"/>
    <property type="evidence" value="ECO:0000250"/>
    <property type="project" value="UniProtKB"/>
</dbReference>
<dbReference type="GO" id="GO:0044306">
    <property type="term" value="C:neuron projection terminus"/>
    <property type="evidence" value="ECO:0000250"/>
    <property type="project" value="UniProtKB"/>
</dbReference>
<dbReference type="GO" id="GO:0005886">
    <property type="term" value="C:plasma membrane"/>
    <property type="evidence" value="ECO:0000250"/>
    <property type="project" value="UniProtKB"/>
</dbReference>
<dbReference type="GO" id="GO:0045202">
    <property type="term" value="C:synapse"/>
    <property type="evidence" value="ECO:0000250"/>
    <property type="project" value="UniProtKB"/>
</dbReference>
<dbReference type="GO" id="GO:0008021">
    <property type="term" value="C:synaptic vesicle"/>
    <property type="evidence" value="ECO:0000250"/>
    <property type="project" value="UniProtKB"/>
</dbReference>
<dbReference type="GO" id="GO:0004222">
    <property type="term" value="F:metalloendopeptidase activity"/>
    <property type="evidence" value="ECO:0000314"/>
    <property type="project" value="UniProtKB"/>
</dbReference>
<dbReference type="GO" id="GO:0042277">
    <property type="term" value="F:peptide binding"/>
    <property type="evidence" value="ECO:0000250"/>
    <property type="project" value="UniProtKB"/>
</dbReference>
<dbReference type="GO" id="GO:0008270">
    <property type="term" value="F:zinc ion binding"/>
    <property type="evidence" value="ECO:0000314"/>
    <property type="project" value="UniProtKB"/>
</dbReference>
<dbReference type="GO" id="GO:0097242">
    <property type="term" value="P:amyloid-beta clearance"/>
    <property type="evidence" value="ECO:0007669"/>
    <property type="project" value="TreeGrafter"/>
</dbReference>
<dbReference type="GO" id="GO:0050435">
    <property type="term" value="P:amyloid-beta metabolic process"/>
    <property type="evidence" value="ECO:0000250"/>
    <property type="project" value="UniProtKB"/>
</dbReference>
<dbReference type="GO" id="GO:0010815">
    <property type="term" value="P:bradykinin catabolic process"/>
    <property type="evidence" value="ECO:0000250"/>
    <property type="project" value="UniProtKB"/>
</dbReference>
<dbReference type="GO" id="GO:0071345">
    <property type="term" value="P:cellular response to cytokine stimulus"/>
    <property type="evidence" value="ECO:0000250"/>
    <property type="project" value="UniProtKB"/>
</dbReference>
<dbReference type="GO" id="GO:0071492">
    <property type="term" value="P:cellular response to UV-A"/>
    <property type="evidence" value="ECO:0000250"/>
    <property type="project" value="UniProtKB"/>
</dbReference>
<dbReference type="GO" id="GO:0071493">
    <property type="term" value="P:cellular response to UV-B"/>
    <property type="evidence" value="ECO:0000250"/>
    <property type="project" value="UniProtKB"/>
</dbReference>
<dbReference type="GO" id="GO:0046449">
    <property type="term" value="P:creatinine metabolic process"/>
    <property type="evidence" value="ECO:0000250"/>
    <property type="project" value="UniProtKB"/>
</dbReference>
<dbReference type="GO" id="GO:0042447">
    <property type="term" value="P:hormone catabolic process"/>
    <property type="evidence" value="ECO:0000250"/>
    <property type="project" value="UniProtKB"/>
</dbReference>
<dbReference type="GO" id="GO:0001822">
    <property type="term" value="P:kidney development"/>
    <property type="evidence" value="ECO:0000250"/>
    <property type="project" value="UniProtKB"/>
</dbReference>
<dbReference type="GO" id="GO:0006518">
    <property type="term" value="P:peptide metabolic process"/>
    <property type="evidence" value="ECO:0000250"/>
    <property type="project" value="UniProtKB"/>
</dbReference>
<dbReference type="GO" id="GO:0016485">
    <property type="term" value="P:protein processing"/>
    <property type="evidence" value="ECO:0007669"/>
    <property type="project" value="TreeGrafter"/>
</dbReference>
<dbReference type="GO" id="GO:0006508">
    <property type="term" value="P:proteolysis"/>
    <property type="evidence" value="ECO:0000314"/>
    <property type="project" value="UniProtKB"/>
</dbReference>
<dbReference type="GO" id="GO:0090399">
    <property type="term" value="P:replicative senescence"/>
    <property type="evidence" value="ECO:0000250"/>
    <property type="project" value="UniProtKB"/>
</dbReference>
<dbReference type="GO" id="GO:0019233">
    <property type="term" value="P:sensory perception of pain"/>
    <property type="evidence" value="ECO:0000250"/>
    <property type="project" value="UniProtKB"/>
</dbReference>
<dbReference type="GO" id="GO:0010814">
    <property type="term" value="P:substance P catabolic process"/>
    <property type="evidence" value="ECO:0000250"/>
    <property type="project" value="UniProtKB"/>
</dbReference>
<dbReference type="CDD" id="cd08662">
    <property type="entry name" value="M13"/>
    <property type="match status" value="1"/>
</dbReference>
<dbReference type="FunFam" id="1.10.1380.10:FF:000002">
    <property type="entry name" value="Membrane metalloendopeptidase"/>
    <property type="match status" value="1"/>
</dbReference>
<dbReference type="Gene3D" id="3.40.390.10">
    <property type="entry name" value="Collagenase (Catalytic Domain)"/>
    <property type="match status" value="1"/>
</dbReference>
<dbReference type="Gene3D" id="1.10.1380.10">
    <property type="entry name" value="Neutral endopeptidase , domain2"/>
    <property type="match status" value="1"/>
</dbReference>
<dbReference type="InterPro" id="IPR024079">
    <property type="entry name" value="MetalloPept_cat_dom_sf"/>
</dbReference>
<dbReference type="InterPro" id="IPR000718">
    <property type="entry name" value="Peptidase_M13"/>
</dbReference>
<dbReference type="InterPro" id="IPR018497">
    <property type="entry name" value="Peptidase_M13_C"/>
</dbReference>
<dbReference type="InterPro" id="IPR042089">
    <property type="entry name" value="Peptidase_M13_dom_2"/>
</dbReference>
<dbReference type="InterPro" id="IPR008753">
    <property type="entry name" value="Peptidase_M13_N"/>
</dbReference>
<dbReference type="PANTHER" id="PTHR11733:SF114">
    <property type="entry name" value="NEPRILYSIN"/>
    <property type="match status" value="1"/>
</dbReference>
<dbReference type="PANTHER" id="PTHR11733">
    <property type="entry name" value="ZINC METALLOPROTEASE FAMILY M13 NEPRILYSIN-RELATED"/>
    <property type="match status" value="1"/>
</dbReference>
<dbReference type="Pfam" id="PF01431">
    <property type="entry name" value="Peptidase_M13"/>
    <property type="match status" value="1"/>
</dbReference>
<dbReference type="Pfam" id="PF05649">
    <property type="entry name" value="Peptidase_M13_N"/>
    <property type="match status" value="1"/>
</dbReference>
<dbReference type="PRINTS" id="PR00786">
    <property type="entry name" value="NEPRILYSIN"/>
</dbReference>
<dbReference type="SUPFAM" id="SSF55486">
    <property type="entry name" value="Metalloproteases ('zincins'), catalytic domain"/>
    <property type="match status" value="1"/>
</dbReference>
<dbReference type="PROSITE" id="PS51885">
    <property type="entry name" value="NEPRILYSIN"/>
    <property type="match status" value="1"/>
</dbReference>
<dbReference type="PROSITE" id="PS00142">
    <property type="entry name" value="ZINC_PROTEASE"/>
    <property type="match status" value="1"/>
</dbReference>